<sequence>MSRFWNRRVRDLHPYVPGEQPKVADLLKLNTNESPHGPSPKVLAAIRDAASDDLRLYPDPTAAVLRDTIAARFGTTSDRVFVGNGSDEVLAHAFRALFHDDAPVLFSDVTYGFYPVYCGLFEQPFRHIPLNDDFAIDIDAYTGDCGGIIIANPNANTGIALPLEQIETLLKRHPDRTVIIDEAYVDFGAQSAIELTHRYDNLLVVQTLSKSYALAGLRVGFAIGSPELIEGLIRVKDSFNSYPLSRPAQAGAIAAIQDTDWLADITARVIASRDRLVPELQNLGFQVLPSCANFVLVHHPAHKAGAIAAALRERAILVRNLSTPRIQDWLRISIGTYEACIRLTDALRDILSPRS</sequence>
<feature type="chain" id="PRO_0000153367" description="Histidinol-phosphate aminotransferase 2">
    <location>
        <begin position="1"/>
        <end position="355"/>
    </location>
</feature>
<feature type="modified residue" description="N6-(pyridoxal phosphate)lysine" evidence="1">
    <location>
        <position position="210"/>
    </location>
</feature>
<name>HIS82_GLUOX</name>
<keyword id="KW-0028">Amino-acid biosynthesis</keyword>
<keyword id="KW-0032">Aminotransferase</keyword>
<keyword id="KW-0368">Histidine biosynthesis</keyword>
<keyword id="KW-0663">Pyridoxal phosphate</keyword>
<keyword id="KW-1185">Reference proteome</keyword>
<keyword id="KW-0808">Transferase</keyword>
<dbReference type="EC" id="2.6.1.9" evidence="1"/>
<dbReference type="EMBL" id="CP000009">
    <property type="protein sequence ID" value="AAW61440.1"/>
    <property type="molecule type" value="Genomic_DNA"/>
</dbReference>
<dbReference type="RefSeq" id="WP_011253222.1">
    <property type="nucleotide sequence ID" value="NC_006677.1"/>
</dbReference>
<dbReference type="SMR" id="Q5FQA6"/>
<dbReference type="STRING" id="290633.GOX1700"/>
<dbReference type="KEGG" id="gox:GOX1700"/>
<dbReference type="eggNOG" id="COG0079">
    <property type="taxonomic scope" value="Bacteria"/>
</dbReference>
<dbReference type="HOGENOM" id="CLU_017584_3_0_5"/>
<dbReference type="UniPathway" id="UPA00031">
    <property type="reaction ID" value="UER00012"/>
</dbReference>
<dbReference type="Proteomes" id="UP000006375">
    <property type="component" value="Chromosome"/>
</dbReference>
<dbReference type="GO" id="GO:0004400">
    <property type="term" value="F:histidinol-phosphate transaminase activity"/>
    <property type="evidence" value="ECO:0007669"/>
    <property type="project" value="UniProtKB-UniRule"/>
</dbReference>
<dbReference type="GO" id="GO:0030170">
    <property type="term" value="F:pyridoxal phosphate binding"/>
    <property type="evidence" value="ECO:0007669"/>
    <property type="project" value="InterPro"/>
</dbReference>
<dbReference type="GO" id="GO:0000105">
    <property type="term" value="P:L-histidine biosynthetic process"/>
    <property type="evidence" value="ECO:0007669"/>
    <property type="project" value="UniProtKB-UniRule"/>
</dbReference>
<dbReference type="CDD" id="cd00609">
    <property type="entry name" value="AAT_like"/>
    <property type="match status" value="1"/>
</dbReference>
<dbReference type="Gene3D" id="3.90.1150.10">
    <property type="entry name" value="Aspartate Aminotransferase, domain 1"/>
    <property type="match status" value="1"/>
</dbReference>
<dbReference type="Gene3D" id="3.40.640.10">
    <property type="entry name" value="Type I PLP-dependent aspartate aminotransferase-like (Major domain)"/>
    <property type="match status" value="1"/>
</dbReference>
<dbReference type="HAMAP" id="MF_01023">
    <property type="entry name" value="HisC_aminotrans_2"/>
    <property type="match status" value="1"/>
</dbReference>
<dbReference type="InterPro" id="IPR001917">
    <property type="entry name" value="Aminotrans_II_pyridoxalP_BS"/>
</dbReference>
<dbReference type="InterPro" id="IPR004839">
    <property type="entry name" value="Aminotransferase_I/II_large"/>
</dbReference>
<dbReference type="InterPro" id="IPR005861">
    <property type="entry name" value="HisP_aminotrans"/>
</dbReference>
<dbReference type="InterPro" id="IPR050106">
    <property type="entry name" value="HistidinolP_aminotransfase"/>
</dbReference>
<dbReference type="InterPro" id="IPR015424">
    <property type="entry name" value="PyrdxlP-dep_Trfase"/>
</dbReference>
<dbReference type="InterPro" id="IPR015421">
    <property type="entry name" value="PyrdxlP-dep_Trfase_major"/>
</dbReference>
<dbReference type="InterPro" id="IPR015422">
    <property type="entry name" value="PyrdxlP-dep_Trfase_small"/>
</dbReference>
<dbReference type="NCBIfam" id="TIGR01141">
    <property type="entry name" value="hisC"/>
    <property type="match status" value="1"/>
</dbReference>
<dbReference type="PANTHER" id="PTHR43643:SF3">
    <property type="entry name" value="HISTIDINOL-PHOSPHATE AMINOTRANSFERASE"/>
    <property type="match status" value="1"/>
</dbReference>
<dbReference type="PANTHER" id="PTHR43643">
    <property type="entry name" value="HISTIDINOL-PHOSPHATE AMINOTRANSFERASE 2"/>
    <property type="match status" value="1"/>
</dbReference>
<dbReference type="Pfam" id="PF00155">
    <property type="entry name" value="Aminotran_1_2"/>
    <property type="match status" value="1"/>
</dbReference>
<dbReference type="SUPFAM" id="SSF53383">
    <property type="entry name" value="PLP-dependent transferases"/>
    <property type="match status" value="1"/>
</dbReference>
<dbReference type="PROSITE" id="PS00599">
    <property type="entry name" value="AA_TRANSFER_CLASS_2"/>
    <property type="match status" value="1"/>
</dbReference>
<comment type="catalytic activity">
    <reaction evidence="1">
        <text>L-histidinol phosphate + 2-oxoglutarate = 3-(imidazol-4-yl)-2-oxopropyl phosphate + L-glutamate</text>
        <dbReference type="Rhea" id="RHEA:23744"/>
        <dbReference type="ChEBI" id="CHEBI:16810"/>
        <dbReference type="ChEBI" id="CHEBI:29985"/>
        <dbReference type="ChEBI" id="CHEBI:57766"/>
        <dbReference type="ChEBI" id="CHEBI:57980"/>
        <dbReference type="EC" id="2.6.1.9"/>
    </reaction>
</comment>
<comment type="cofactor">
    <cofactor evidence="1">
        <name>pyridoxal 5'-phosphate</name>
        <dbReference type="ChEBI" id="CHEBI:597326"/>
    </cofactor>
</comment>
<comment type="pathway">
    <text evidence="1">Amino-acid biosynthesis; L-histidine biosynthesis; L-histidine from 5-phospho-alpha-D-ribose 1-diphosphate: step 7/9.</text>
</comment>
<comment type="subunit">
    <text evidence="1">Homodimer.</text>
</comment>
<comment type="similarity">
    <text evidence="1">Belongs to the class-II pyridoxal-phosphate-dependent aminotransferase family. Histidinol-phosphate aminotransferase subfamily.</text>
</comment>
<organism>
    <name type="scientific">Gluconobacter oxydans (strain 621H)</name>
    <name type="common">Gluconobacter suboxydans</name>
    <dbReference type="NCBI Taxonomy" id="290633"/>
    <lineage>
        <taxon>Bacteria</taxon>
        <taxon>Pseudomonadati</taxon>
        <taxon>Pseudomonadota</taxon>
        <taxon>Alphaproteobacteria</taxon>
        <taxon>Acetobacterales</taxon>
        <taxon>Acetobacteraceae</taxon>
        <taxon>Gluconobacter</taxon>
    </lineage>
</organism>
<evidence type="ECO:0000255" key="1">
    <source>
        <dbReference type="HAMAP-Rule" id="MF_01023"/>
    </source>
</evidence>
<protein>
    <recommendedName>
        <fullName evidence="1">Histidinol-phosphate aminotransferase 2</fullName>
        <ecNumber evidence="1">2.6.1.9</ecNumber>
    </recommendedName>
    <alternativeName>
        <fullName evidence="1">Imidazole acetol-phosphate transaminase 2</fullName>
    </alternativeName>
</protein>
<proteinExistence type="inferred from homology"/>
<reference key="1">
    <citation type="journal article" date="2005" name="Nat. Biotechnol.">
        <title>Complete genome sequence of the acetic acid bacterium Gluconobacter oxydans.</title>
        <authorList>
            <person name="Prust C."/>
            <person name="Hoffmeister M."/>
            <person name="Liesegang H."/>
            <person name="Wiezer A."/>
            <person name="Fricke W.F."/>
            <person name="Ehrenreich A."/>
            <person name="Gottschalk G."/>
            <person name="Deppenmeier U."/>
        </authorList>
    </citation>
    <scope>NUCLEOTIDE SEQUENCE [LARGE SCALE GENOMIC DNA]</scope>
    <source>
        <strain>621H</strain>
    </source>
</reference>
<accession>Q5FQA6</accession>
<gene>
    <name evidence="1" type="primary">hisC2</name>
    <name type="ordered locus">GOX1700</name>
</gene>